<protein>
    <recommendedName>
        <fullName evidence="1">Glutamyl-tRNA(Gln) amidotransferase subunit A</fullName>
        <shortName evidence="1">Glu-ADT subunit A</shortName>
        <ecNumber evidence="1">6.3.5.7</ecNumber>
    </recommendedName>
</protein>
<sequence length="481" mass="51955">MQFRRYEDLRSKLLSRELTCEQVISEYLQRIDSKKDDNIFTAVFHEAALERARELDAKLERGEEPGVLFGMPIAIKDNISMKGAPLSCASKILDGYESVYDATAIERMVAEDAIFVGRTNMDEFAMGSSNENSAIGPVPNPFDKTRVPGGSSGGSAAAVANDLCMVALGSDTGGSVRQPGGFCNVVGLKPTYGRISRYGLVAFASSFDQIGVLAANCDDAALVLGVIAGQDDRDATSSHHEVPDYESTMDHVSLEGLRVGVPSAFFPENLNADVAGVVKAGLKKLEDAGAELVEIELPESDYAIAAYYILVTAEASSNLARFDGARYGYRSPDSPDLSSMYVNSRTEGFGAEVKRRIMLGTYVLSAGYYDTYYKKAQQVRRVFQEKYREAFEKVDVIAGPTSPFPPFGIGDKMDNPLEMYLADVFTVPASIVGMPAVSVPVGFDSLGLPVGVHLICNFFEEGKMLGIARNLQALCQTAPSN</sequence>
<gene>
    <name evidence="1" type="primary">gatA</name>
    <name type="ordered locus">Cpar_1766</name>
</gene>
<keyword id="KW-0067">ATP-binding</keyword>
<keyword id="KW-0436">Ligase</keyword>
<keyword id="KW-0547">Nucleotide-binding</keyword>
<keyword id="KW-0648">Protein biosynthesis</keyword>
<proteinExistence type="inferred from homology"/>
<evidence type="ECO:0000255" key="1">
    <source>
        <dbReference type="HAMAP-Rule" id="MF_00120"/>
    </source>
</evidence>
<name>GATA_CHLP8</name>
<accession>B3QQF5</accession>
<dbReference type="EC" id="6.3.5.7" evidence="1"/>
<dbReference type="EMBL" id="CP001099">
    <property type="protein sequence ID" value="ACF12158.1"/>
    <property type="molecule type" value="Genomic_DNA"/>
</dbReference>
<dbReference type="RefSeq" id="WP_012502991.1">
    <property type="nucleotide sequence ID" value="NC_011027.1"/>
</dbReference>
<dbReference type="SMR" id="B3QQF5"/>
<dbReference type="STRING" id="517417.Cpar_1766"/>
<dbReference type="KEGG" id="cpc:Cpar_1766"/>
<dbReference type="eggNOG" id="COG0154">
    <property type="taxonomic scope" value="Bacteria"/>
</dbReference>
<dbReference type="HOGENOM" id="CLU_009600_0_3_10"/>
<dbReference type="OrthoDB" id="9811471at2"/>
<dbReference type="Proteomes" id="UP000008811">
    <property type="component" value="Chromosome"/>
</dbReference>
<dbReference type="GO" id="GO:0030956">
    <property type="term" value="C:glutamyl-tRNA(Gln) amidotransferase complex"/>
    <property type="evidence" value="ECO:0007669"/>
    <property type="project" value="InterPro"/>
</dbReference>
<dbReference type="GO" id="GO:0005524">
    <property type="term" value="F:ATP binding"/>
    <property type="evidence" value="ECO:0007669"/>
    <property type="project" value="UniProtKB-KW"/>
</dbReference>
<dbReference type="GO" id="GO:0050567">
    <property type="term" value="F:glutaminyl-tRNA synthase (glutamine-hydrolyzing) activity"/>
    <property type="evidence" value="ECO:0007669"/>
    <property type="project" value="UniProtKB-UniRule"/>
</dbReference>
<dbReference type="GO" id="GO:0006412">
    <property type="term" value="P:translation"/>
    <property type="evidence" value="ECO:0007669"/>
    <property type="project" value="UniProtKB-UniRule"/>
</dbReference>
<dbReference type="Gene3D" id="3.90.1300.10">
    <property type="entry name" value="Amidase signature (AS) domain"/>
    <property type="match status" value="1"/>
</dbReference>
<dbReference type="HAMAP" id="MF_00120">
    <property type="entry name" value="GatA"/>
    <property type="match status" value="1"/>
</dbReference>
<dbReference type="InterPro" id="IPR000120">
    <property type="entry name" value="Amidase"/>
</dbReference>
<dbReference type="InterPro" id="IPR020556">
    <property type="entry name" value="Amidase_CS"/>
</dbReference>
<dbReference type="InterPro" id="IPR023631">
    <property type="entry name" value="Amidase_dom"/>
</dbReference>
<dbReference type="InterPro" id="IPR036928">
    <property type="entry name" value="AS_sf"/>
</dbReference>
<dbReference type="InterPro" id="IPR004412">
    <property type="entry name" value="GatA"/>
</dbReference>
<dbReference type="NCBIfam" id="TIGR00132">
    <property type="entry name" value="gatA"/>
    <property type="match status" value="1"/>
</dbReference>
<dbReference type="PANTHER" id="PTHR11895:SF7">
    <property type="entry name" value="GLUTAMYL-TRNA(GLN) AMIDOTRANSFERASE SUBUNIT A, MITOCHONDRIAL"/>
    <property type="match status" value="1"/>
</dbReference>
<dbReference type="PANTHER" id="PTHR11895">
    <property type="entry name" value="TRANSAMIDASE"/>
    <property type="match status" value="1"/>
</dbReference>
<dbReference type="Pfam" id="PF01425">
    <property type="entry name" value="Amidase"/>
    <property type="match status" value="1"/>
</dbReference>
<dbReference type="SUPFAM" id="SSF75304">
    <property type="entry name" value="Amidase signature (AS) enzymes"/>
    <property type="match status" value="1"/>
</dbReference>
<dbReference type="PROSITE" id="PS00571">
    <property type="entry name" value="AMIDASES"/>
    <property type="match status" value="1"/>
</dbReference>
<feature type="chain" id="PRO_1000095119" description="Glutamyl-tRNA(Gln) amidotransferase subunit A">
    <location>
        <begin position="1"/>
        <end position="481"/>
    </location>
</feature>
<feature type="active site" description="Charge relay system" evidence="1">
    <location>
        <position position="76"/>
    </location>
</feature>
<feature type="active site" description="Charge relay system" evidence="1">
    <location>
        <position position="151"/>
    </location>
</feature>
<feature type="active site" description="Acyl-ester intermediate" evidence="1">
    <location>
        <position position="175"/>
    </location>
</feature>
<comment type="function">
    <text evidence="1">Allows the formation of correctly charged Gln-tRNA(Gln) through the transamidation of misacylated Glu-tRNA(Gln) in organisms which lack glutaminyl-tRNA synthetase. The reaction takes place in the presence of glutamine and ATP through an activated gamma-phospho-Glu-tRNA(Gln).</text>
</comment>
<comment type="catalytic activity">
    <reaction evidence="1">
        <text>L-glutamyl-tRNA(Gln) + L-glutamine + ATP + H2O = L-glutaminyl-tRNA(Gln) + L-glutamate + ADP + phosphate + H(+)</text>
        <dbReference type="Rhea" id="RHEA:17521"/>
        <dbReference type="Rhea" id="RHEA-COMP:9681"/>
        <dbReference type="Rhea" id="RHEA-COMP:9684"/>
        <dbReference type="ChEBI" id="CHEBI:15377"/>
        <dbReference type="ChEBI" id="CHEBI:15378"/>
        <dbReference type="ChEBI" id="CHEBI:29985"/>
        <dbReference type="ChEBI" id="CHEBI:30616"/>
        <dbReference type="ChEBI" id="CHEBI:43474"/>
        <dbReference type="ChEBI" id="CHEBI:58359"/>
        <dbReference type="ChEBI" id="CHEBI:78520"/>
        <dbReference type="ChEBI" id="CHEBI:78521"/>
        <dbReference type="ChEBI" id="CHEBI:456216"/>
        <dbReference type="EC" id="6.3.5.7"/>
    </reaction>
</comment>
<comment type="subunit">
    <text evidence="1">Heterotrimer of A, B and C subunits.</text>
</comment>
<comment type="similarity">
    <text evidence="1">Belongs to the amidase family. GatA subfamily.</text>
</comment>
<reference key="1">
    <citation type="submission" date="2008-06" db="EMBL/GenBank/DDBJ databases">
        <title>Complete sequence of Chlorobaculum parvum NCIB 8327.</title>
        <authorList>
            <consortium name="US DOE Joint Genome Institute"/>
            <person name="Lucas S."/>
            <person name="Copeland A."/>
            <person name="Lapidus A."/>
            <person name="Glavina del Rio T."/>
            <person name="Dalin E."/>
            <person name="Tice H."/>
            <person name="Bruce D."/>
            <person name="Goodwin L."/>
            <person name="Pitluck S."/>
            <person name="Schmutz J."/>
            <person name="Larimer F."/>
            <person name="Land M."/>
            <person name="Hauser L."/>
            <person name="Kyrpides N."/>
            <person name="Mikhailova N."/>
            <person name="Zhao F."/>
            <person name="Li T."/>
            <person name="Liu Z."/>
            <person name="Overmann J."/>
            <person name="Bryant D.A."/>
            <person name="Richardson P."/>
        </authorList>
    </citation>
    <scope>NUCLEOTIDE SEQUENCE [LARGE SCALE GENOMIC DNA]</scope>
    <source>
        <strain>DSM 263 / NCIMB 8327</strain>
    </source>
</reference>
<organism>
    <name type="scientific">Chlorobaculum parvum (strain DSM 263 / NCIMB 8327)</name>
    <name type="common">Chlorobium vibrioforme subsp. thiosulfatophilum</name>
    <dbReference type="NCBI Taxonomy" id="517417"/>
    <lineage>
        <taxon>Bacteria</taxon>
        <taxon>Pseudomonadati</taxon>
        <taxon>Chlorobiota</taxon>
        <taxon>Chlorobiia</taxon>
        <taxon>Chlorobiales</taxon>
        <taxon>Chlorobiaceae</taxon>
        <taxon>Chlorobaculum</taxon>
    </lineage>
</organism>